<name>ARCC_LENHI</name>
<sequence>MGRKIVVALGGNAILSKDASAAAQQQALMDTAKHLVKFIENGDQLIISHGNGPQVGNLLLQQSAGSTEENPAMPLDTAVAMTQGSIGYWMQNAMNQVLKEKGLNKTVATVVTQVEVSADDPAFTNPTKPIGPFMSKDEADLAKKENPDFTFVEDAGRGYRRVVPSPKPIGVVETDAVNTLVDAGIVPISVGGGGIPVVADGNQLLGREAVIDKDFASEKLAELVGADALIILTAVPNIYVNFNKPNQKKLEHVSVNDLETYISEKQFAPGSMLPKVQAAIDFVKATGNEAVVTALDNIEGFVNEGSGTVITKKVRQQA</sequence>
<comment type="catalytic activity">
    <reaction>
        <text>hydrogencarbonate + NH4(+) + ATP = carbamoyl phosphate + ADP + H2O + H(+)</text>
        <dbReference type="Rhea" id="RHEA:10152"/>
        <dbReference type="ChEBI" id="CHEBI:15377"/>
        <dbReference type="ChEBI" id="CHEBI:15378"/>
        <dbReference type="ChEBI" id="CHEBI:17544"/>
        <dbReference type="ChEBI" id="CHEBI:28938"/>
        <dbReference type="ChEBI" id="CHEBI:30616"/>
        <dbReference type="ChEBI" id="CHEBI:58228"/>
        <dbReference type="ChEBI" id="CHEBI:456216"/>
        <dbReference type="EC" id="2.7.2.2"/>
    </reaction>
</comment>
<comment type="pathway">
    <text>Metabolic intermediate metabolism; carbamoyl phosphate degradation; CO(2) and NH(3) from carbamoyl phosphate: step 1/1.</text>
</comment>
<comment type="subcellular location">
    <subcellularLocation>
        <location evidence="1">Cytoplasm</location>
    </subcellularLocation>
</comment>
<comment type="similarity">
    <text evidence="1">Belongs to the carbamate kinase family.</text>
</comment>
<gene>
    <name type="primary">arcC</name>
</gene>
<proteinExistence type="inferred from homology"/>
<feature type="chain" id="PRO_0000185126" description="Carbamate kinase">
    <location>
        <begin position="1"/>
        <end position="318"/>
    </location>
</feature>
<evidence type="ECO:0000305" key="1"/>
<reference key="1">
    <citation type="journal article" date="2002" name="Gene">
        <title>The arginine deiminase pathway in the wine lactic acid bacterium Lactobacillus hilgardii X1B: structural and functional study of the arcABC genes.</title>
        <authorList>
            <person name="Arena M.E."/>
            <person name="Manca de Nadra M.C."/>
            <person name="Munoz R."/>
        </authorList>
    </citation>
    <scope>NUCLEOTIDE SEQUENCE [GENOMIC DNA]</scope>
    <source>
        <strain>X(1)B</strain>
    </source>
</reference>
<dbReference type="EC" id="2.7.2.2"/>
<dbReference type="EMBL" id="AJ421514">
    <property type="protein sequence ID" value="CAD13393.1"/>
    <property type="molecule type" value="Genomic_DNA"/>
</dbReference>
<dbReference type="RefSeq" id="WP_003634647.1">
    <property type="nucleotide sequence ID" value="NZ_PUFR01000061.1"/>
</dbReference>
<dbReference type="SMR" id="Q8G997"/>
<dbReference type="UniPathway" id="UPA00996">
    <property type="reaction ID" value="UER00366"/>
</dbReference>
<dbReference type="GO" id="GO:0005829">
    <property type="term" value="C:cytosol"/>
    <property type="evidence" value="ECO:0007669"/>
    <property type="project" value="TreeGrafter"/>
</dbReference>
<dbReference type="GO" id="GO:0005524">
    <property type="term" value="F:ATP binding"/>
    <property type="evidence" value="ECO:0007669"/>
    <property type="project" value="UniProtKB-KW"/>
</dbReference>
<dbReference type="GO" id="GO:0008804">
    <property type="term" value="F:carbamate kinase activity"/>
    <property type="evidence" value="ECO:0007669"/>
    <property type="project" value="UniProtKB-EC"/>
</dbReference>
<dbReference type="GO" id="GO:0019546">
    <property type="term" value="P:arginine deiminase pathway"/>
    <property type="evidence" value="ECO:0007669"/>
    <property type="project" value="TreeGrafter"/>
</dbReference>
<dbReference type="CDD" id="cd04235">
    <property type="entry name" value="AAK_CK"/>
    <property type="match status" value="1"/>
</dbReference>
<dbReference type="FunFam" id="3.40.1160.10:FF:000007">
    <property type="entry name" value="Carbamate kinase"/>
    <property type="match status" value="1"/>
</dbReference>
<dbReference type="Gene3D" id="3.40.1160.10">
    <property type="entry name" value="Acetylglutamate kinase-like"/>
    <property type="match status" value="1"/>
</dbReference>
<dbReference type="InterPro" id="IPR036393">
    <property type="entry name" value="AceGlu_kinase-like_sf"/>
</dbReference>
<dbReference type="InterPro" id="IPR001048">
    <property type="entry name" value="Asp/Glu/Uridylate_kinase"/>
</dbReference>
<dbReference type="InterPro" id="IPR003964">
    <property type="entry name" value="Carb_kinase"/>
</dbReference>
<dbReference type="NCBIfam" id="TIGR00746">
    <property type="entry name" value="arcC"/>
    <property type="match status" value="1"/>
</dbReference>
<dbReference type="NCBIfam" id="NF009007">
    <property type="entry name" value="PRK12352.1"/>
    <property type="match status" value="1"/>
</dbReference>
<dbReference type="PANTHER" id="PTHR30409">
    <property type="entry name" value="CARBAMATE KINASE"/>
    <property type="match status" value="1"/>
</dbReference>
<dbReference type="PANTHER" id="PTHR30409:SF1">
    <property type="entry name" value="CARBAMATE KINASE-RELATED"/>
    <property type="match status" value="1"/>
</dbReference>
<dbReference type="Pfam" id="PF00696">
    <property type="entry name" value="AA_kinase"/>
    <property type="match status" value="1"/>
</dbReference>
<dbReference type="PIRSF" id="PIRSF000723">
    <property type="entry name" value="Carbamate_kin"/>
    <property type="match status" value="1"/>
</dbReference>
<dbReference type="PRINTS" id="PR01469">
    <property type="entry name" value="CARBMTKINASE"/>
</dbReference>
<dbReference type="SUPFAM" id="SSF53633">
    <property type="entry name" value="Carbamate kinase-like"/>
    <property type="match status" value="1"/>
</dbReference>
<organism>
    <name type="scientific">Lentilactobacillus hilgardii</name>
    <name type="common">Lactobacillus hilgardii</name>
    <dbReference type="NCBI Taxonomy" id="1588"/>
    <lineage>
        <taxon>Bacteria</taxon>
        <taxon>Bacillati</taxon>
        <taxon>Bacillota</taxon>
        <taxon>Bacilli</taxon>
        <taxon>Lactobacillales</taxon>
        <taxon>Lactobacillaceae</taxon>
        <taxon>Lentilactobacillus</taxon>
    </lineage>
</organism>
<protein>
    <recommendedName>
        <fullName>Carbamate kinase</fullName>
        <ecNumber>2.7.2.2</ecNumber>
    </recommendedName>
</protein>
<keyword id="KW-0056">Arginine metabolism</keyword>
<keyword id="KW-0067">ATP-binding</keyword>
<keyword id="KW-0963">Cytoplasm</keyword>
<keyword id="KW-0418">Kinase</keyword>
<keyword id="KW-0547">Nucleotide-binding</keyword>
<keyword id="KW-0808">Transferase</keyword>
<accession>Q8G997</accession>